<name>RIMO_CHLTE</name>
<feature type="chain" id="PRO_0000374769" description="Ribosomal protein uS12 methylthiotransferase RimO">
    <location>
        <begin position="1"/>
        <end position="434"/>
    </location>
</feature>
<feature type="domain" description="MTTase N-terminal" evidence="1">
    <location>
        <begin position="9"/>
        <end position="125"/>
    </location>
</feature>
<feature type="domain" description="Radical SAM core" evidence="2">
    <location>
        <begin position="135"/>
        <end position="364"/>
    </location>
</feature>
<feature type="domain" description="TRAM" evidence="1">
    <location>
        <begin position="367"/>
        <end position="434"/>
    </location>
</feature>
<feature type="binding site" evidence="1">
    <location>
        <position position="18"/>
    </location>
    <ligand>
        <name>[4Fe-4S] cluster</name>
        <dbReference type="ChEBI" id="CHEBI:49883"/>
        <label>1</label>
    </ligand>
</feature>
<feature type="binding site" evidence="1">
    <location>
        <position position="54"/>
    </location>
    <ligand>
        <name>[4Fe-4S] cluster</name>
        <dbReference type="ChEBI" id="CHEBI:49883"/>
        <label>1</label>
    </ligand>
</feature>
<feature type="binding site" evidence="1">
    <location>
        <position position="88"/>
    </location>
    <ligand>
        <name>[4Fe-4S] cluster</name>
        <dbReference type="ChEBI" id="CHEBI:49883"/>
        <label>1</label>
    </ligand>
</feature>
<feature type="binding site" evidence="1">
    <location>
        <position position="149"/>
    </location>
    <ligand>
        <name>[4Fe-4S] cluster</name>
        <dbReference type="ChEBI" id="CHEBI:49883"/>
        <label>2</label>
        <note>4Fe-4S-S-AdoMet</note>
    </ligand>
</feature>
<feature type="binding site" evidence="1">
    <location>
        <position position="153"/>
    </location>
    <ligand>
        <name>[4Fe-4S] cluster</name>
        <dbReference type="ChEBI" id="CHEBI:49883"/>
        <label>2</label>
        <note>4Fe-4S-S-AdoMet</note>
    </ligand>
</feature>
<feature type="binding site" evidence="1">
    <location>
        <position position="156"/>
    </location>
    <ligand>
        <name>[4Fe-4S] cluster</name>
        <dbReference type="ChEBI" id="CHEBI:49883"/>
        <label>2</label>
        <note>4Fe-4S-S-AdoMet</note>
    </ligand>
</feature>
<reference key="1">
    <citation type="journal article" date="2002" name="Proc. Natl. Acad. Sci. U.S.A.">
        <title>The complete genome sequence of Chlorobium tepidum TLS, a photosynthetic, anaerobic, green-sulfur bacterium.</title>
        <authorList>
            <person name="Eisen J.A."/>
            <person name="Nelson K.E."/>
            <person name="Paulsen I.T."/>
            <person name="Heidelberg J.F."/>
            <person name="Wu M."/>
            <person name="Dodson R.J."/>
            <person name="DeBoy R.T."/>
            <person name="Gwinn M.L."/>
            <person name="Nelson W.C."/>
            <person name="Haft D.H."/>
            <person name="Hickey E.K."/>
            <person name="Peterson J.D."/>
            <person name="Durkin A.S."/>
            <person name="Kolonay J.F."/>
            <person name="Yang F."/>
            <person name="Holt I.E."/>
            <person name="Umayam L.A."/>
            <person name="Mason T.M."/>
            <person name="Brenner M."/>
            <person name="Shea T.P."/>
            <person name="Parksey D.S."/>
            <person name="Nierman W.C."/>
            <person name="Feldblyum T.V."/>
            <person name="Hansen C.L."/>
            <person name="Craven M.B."/>
            <person name="Radune D."/>
            <person name="Vamathevan J.J."/>
            <person name="Khouri H.M."/>
            <person name="White O."/>
            <person name="Gruber T.M."/>
            <person name="Ketchum K.A."/>
            <person name="Venter J.C."/>
            <person name="Tettelin H."/>
            <person name="Bryant D.A."/>
            <person name="Fraser C.M."/>
        </authorList>
    </citation>
    <scope>NUCLEOTIDE SEQUENCE [LARGE SCALE GENOMIC DNA]</scope>
    <source>
        <strain>ATCC 49652 / DSM 12025 / NBRC 103806 / TLS</strain>
    </source>
</reference>
<dbReference type="EC" id="2.8.4.4" evidence="1"/>
<dbReference type="EMBL" id="AE006470">
    <property type="protein sequence ID" value="AAM72626.1"/>
    <property type="molecule type" value="Genomic_DNA"/>
</dbReference>
<dbReference type="RefSeq" id="NP_662284.1">
    <property type="nucleotide sequence ID" value="NC_002932.3"/>
</dbReference>
<dbReference type="RefSeq" id="WP_010933065.1">
    <property type="nucleotide sequence ID" value="NC_002932.3"/>
</dbReference>
<dbReference type="SMR" id="Q8KCL7"/>
<dbReference type="STRING" id="194439.CT1398"/>
<dbReference type="EnsemblBacteria" id="AAM72626">
    <property type="protein sequence ID" value="AAM72626"/>
    <property type="gene ID" value="CT1398"/>
</dbReference>
<dbReference type="KEGG" id="cte:CT1398"/>
<dbReference type="PATRIC" id="fig|194439.7.peg.1268"/>
<dbReference type="eggNOG" id="COG0621">
    <property type="taxonomic scope" value="Bacteria"/>
</dbReference>
<dbReference type="HOGENOM" id="CLU_018697_0_1_10"/>
<dbReference type="OrthoDB" id="9805215at2"/>
<dbReference type="Proteomes" id="UP000001007">
    <property type="component" value="Chromosome"/>
</dbReference>
<dbReference type="GO" id="GO:0005829">
    <property type="term" value="C:cytosol"/>
    <property type="evidence" value="ECO:0007669"/>
    <property type="project" value="TreeGrafter"/>
</dbReference>
<dbReference type="GO" id="GO:0051539">
    <property type="term" value="F:4 iron, 4 sulfur cluster binding"/>
    <property type="evidence" value="ECO:0007669"/>
    <property type="project" value="UniProtKB-UniRule"/>
</dbReference>
<dbReference type="GO" id="GO:0035599">
    <property type="term" value="F:aspartic acid methylthiotransferase activity"/>
    <property type="evidence" value="ECO:0007669"/>
    <property type="project" value="TreeGrafter"/>
</dbReference>
<dbReference type="GO" id="GO:0046872">
    <property type="term" value="F:metal ion binding"/>
    <property type="evidence" value="ECO:0007669"/>
    <property type="project" value="UniProtKB-KW"/>
</dbReference>
<dbReference type="GO" id="GO:0103039">
    <property type="term" value="F:protein methylthiotransferase activity"/>
    <property type="evidence" value="ECO:0007669"/>
    <property type="project" value="UniProtKB-EC"/>
</dbReference>
<dbReference type="GO" id="GO:0006400">
    <property type="term" value="P:tRNA modification"/>
    <property type="evidence" value="ECO:0007669"/>
    <property type="project" value="InterPro"/>
</dbReference>
<dbReference type="CDD" id="cd01335">
    <property type="entry name" value="Radical_SAM"/>
    <property type="match status" value="1"/>
</dbReference>
<dbReference type="FunFam" id="3.80.30.20:FF:000001">
    <property type="entry name" value="tRNA-2-methylthio-N(6)-dimethylallyladenosine synthase 2"/>
    <property type="match status" value="1"/>
</dbReference>
<dbReference type="Gene3D" id="3.40.50.12160">
    <property type="entry name" value="Methylthiotransferase, N-terminal domain"/>
    <property type="match status" value="1"/>
</dbReference>
<dbReference type="Gene3D" id="2.40.50.140">
    <property type="entry name" value="Nucleic acid-binding proteins"/>
    <property type="match status" value="1"/>
</dbReference>
<dbReference type="Gene3D" id="3.80.30.20">
    <property type="entry name" value="tm_1862 like domain"/>
    <property type="match status" value="1"/>
</dbReference>
<dbReference type="HAMAP" id="MF_01865">
    <property type="entry name" value="MTTase_RimO"/>
    <property type="match status" value="1"/>
</dbReference>
<dbReference type="InterPro" id="IPR006638">
    <property type="entry name" value="Elp3/MiaA/NifB-like_rSAM"/>
</dbReference>
<dbReference type="InterPro" id="IPR005839">
    <property type="entry name" value="Methylthiotransferase"/>
</dbReference>
<dbReference type="InterPro" id="IPR020612">
    <property type="entry name" value="Methylthiotransferase_CS"/>
</dbReference>
<dbReference type="InterPro" id="IPR013848">
    <property type="entry name" value="Methylthiotransferase_N"/>
</dbReference>
<dbReference type="InterPro" id="IPR038135">
    <property type="entry name" value="Methylthiotransferase_N_sf"/>
</dbReference>
<dbReference type="InterPro" id="IPR012340">
    <property type="entry name" value="NA-bd_OB-fold"/>
</dbReference>
<dbReference type="InterPro" id="IPR005840">
    <property type="entry name" value="Ribosomal_uS12_MeSTrfase_RimO"/>
</dbReference>
<dbReference type="InterPro" id="IPR007197">
    <property type="entry name" value="rSAM"/>
</dbReference>
<dbReference type="InterPro" id="IPR023404">
    <property type="entry name" value="rSAM_horseshoe"/>
</dbReference>
<dbReference type="InterPro" id="IPR002792">
    <property type="entry name" value="TRAM_dom"/>
</dbReference>
<dbReference type="NCBIfam" id="TIGR01125">
    <property type="entry name" value="30S ribosomal protein S12 methylthiotransferase RimO"/>
    <property type="match status" value="1"/>
</dbReference>
<dbReference type="NCBIfam" id="TIGR00089">
    <property type="entry name" value="MiaB/RimO family radical SAM methylthiotransferase"/>
    <property type="match status" value="1"/>
</dbReference>
<dbReference type="PANTHER" id="PTHR43837">
    <property type="entry name" value="RIBOSOMAL PROTEIN S12 METHYLTHIOTRANSFERASE RIMO"/>
    <property type="match status" value="1"/>
</dbReference>
<dbReference type="PANTHER" id="PTHR43837:SF1">
    <property type="entry name" value="RIBOSOMAL PROTEIN US12 METHYLTHIOTRANSFERASE RIMO"/>
    <property type="match status" value="1"/>
</dbReference>
<dbReference type="Pfam" id="PF04055">
    <property type="entry name" value="Radical_SAM"/>
    <property type="match status" value="1"/>
</dbReference>
<dbReference type="Pfam" id="PF18693">
    <property type="entry name" value="TRAM_2"/>
    <property type="match status" value="1"/>
</dbReference>
<dbReference type="Pfam" id="PF00919">
    <property type="entry name" value="UPF0004"/>
    <property type="match status" value="1"/>
</dbReference>
<dbReference type="SFLD" id="SFLDG01082">
    <property type="entry name" value="B12-binding_domain_containing"/>
    <property type="match status" value="1"/>
</dbReference>
<dbReference type="SFLD" id="SFLDS00029">
    <property type="entry name" value="Radical_SAM"/>
    <property type="match status" value="1"/>
</dbReference>
<dbReference type="SFLD" id="SFLDF00274">
    <property type="entry name" value="ribosomal_protein_S12_methylth"/>
    <property type="match status" value="1"/>
</dbReference>
<dbReference type="SMART" id="SM00729">
    <property type="entry name" value="Elp3"/>
    <property type="match status" value="1"/>
</dbReference>
<dbReference type="SUPFAM" id="SSF102114">
    <property type="entry name" value="Radical SAM enzymes"/>
    <property type="match status" value="1"/>
</dbReference>
<dbReference type="PROSITE" id="PS51449">
    <property type="entry name" value="MTTASE_N"/>
    <property type="match status" value="1"/>
</dbReference>
<dbReference type="PROSITE" id="PS01278">
    <property type="entry name" value="MTTASE_RADICAL"/>
    <property type="match status" value="1"/>
</dbReference>
<dbReference type="PROSITE" id="PS51918">
    <property type="entry name" value="RADICAL_SAM"/>
    <property type="match status" value="1"/>
</dbReference>
<dbReference type="PROSITE" id="PS50926">
    <property type="entry name" value="TRAM"/>
    <property type="match status" value="1"/>
</dbReference>
<keyword id="KW-0004">4Fe-4S</keyword>
<keyword id="KW-0963">Cytoplasm</keyword>
<keyword id="KW-0408">Iron</keyword>
<keyword id="KW-0411">Iron-sulfur</keyword>
<keyword id="KW-0479">Metal-binding</keyword>
<keyword id="KW-1185">Reference proteome</keyword>
<keyword id="KW-0949">S-adenosyl-L-methionine</keyword>
<keyword id="KW-0808">Transferase</keyword>
<sequence length="434" mass="49410">MTKTDERKPAIFLLSLGCSKNTVDSERLTAQAVASGLTFTDNVDEADIILINTCGFIKDAKQESIDETLAAIGKKEEGVVREVYVMGCLVELYRKELAEEMPEIDGLFGTRELPEVLAAIGAKYREELFDRRELLTPPHYAFLKIAEGCNRRCSFCSIPKIRGPYVSQPIEQLLREAALLQQQGVKELNLIAQDISVYGYDLYGKSALNDLTLRLSDMGFNWIRLLYAYPLNFPLEVISTMRERPNVCNYIDMPLQHINDRILKSMQRGIGRKATEQLIDDIRQKNPDIRLRTTMIAGYPGETRAEFEELLDFIRQTRFDRLGCFPYRHEEHASAYALEDTVSDEEKEKRVGELMELQEGISASLNRKLEGQTLKVLIDRIEESVAYARTEYDAPEVDNDVIIEIGDEAVEEGDFRQVMIEDSTAYELFGRISG</sequence>
<organism>
    <name type="scientific">Chlorobaculum tepidum (strain ATCC 49652 / DSM 12025 / NBRC 103806 / TLS)</name>
    <name type="common">Chlorobium tepidum</name>
    <dbReference type="NCBI Taxonomy" id="194439"/>
    <lineage>
        <taxon>Bacteria</taxon>
        <taxon>Pseudomonadati</taxon>
        <taxon>Chlorobiota</taxon>
        <taxon>Chlorobiia</taxon>
        <taxon>Chlorobiales</taxon>
        <taxon>Chlorobiaceae</taxon>
        <taxon>Chlorobaculum</taxon>
    </lineage>
</organism>
<comment type="function">
    <text evidence="1">Catalyzes the methylthiolation of an aspartic acid residue of ribosomal protein uS12.</text>
</comment>
<comment type="catalytic activity">
    <reaction evidence="1">
        <text>L-aspartate(89)-[ribosomal protein uS12]-hydrogen + (sulfur carrier)-SH + AH2 + 2 S-adenosyl-L-methionine = 3-methylsulfanyl-L-aspartate(89)-[ribosomal protein uS12]-hydrogen + (sulfur carrier)-H + 5'-deoxyadenosine + L-methionine + A + S-adenosyl-L-homocysteine + 2 H(+)</text>
        <dbReference type="Rhea" id="RHEA:37087"/>
        <dbReference type="Rhea" id="RHEA-COMP:10460"/>
        <dbReference type="Rhea" id="RHEA-COMP:10461"/>
        <dbReference type="Rhea" id="RHEA-COMP:14737"/>
        <dbReference type="Rhea" id="RHEA-COMP:14739"/>
        <dbReference type="ChEBI" id="CHEBI:13193"/>
        <dbReference type="ChEBI" id="CHEBI:15378"/>
        <dbReference type="ChEBI" id="CHEBI:17319"/>
        <dbReference type="ChEBI" id="CHEBI:17499"/>
        <dbReference type="ChEBI" id="CHEBI:29917"/>
        <dbReference type="ChEBI" id="CHEBI:29961"/>
        <dbReference type="ChEBI" id="CHEBI:57844"/>
        <dbReference type="ChEBI" id="CHEBI:57856"/>
        <dbReference type="ChEBI" id="CHEBI:59789"/>
        <dbReference type="ChEBI" id="CHEBI:64428"/>
        <dbReference type="ChEBI" id="CHEBI:73599"/>
        <dbReference type="EC" id="2.8.4.4"/>
    </reaction>
</comment>
<comment type="cofactor">
    <cofactor evidence="1">
        <name>[4Fe-4S] cluster</name>
        <dbReference type="ChEBI" id="CHEBI:49883"/>
    </cofactor>
    <text evidence="1">Binds 2 [4Fe-4S] clusters. One cluster is coordinated with 3 cysteines and an exchangeable S-adenosyl-L-methionine.</text>
</comment>
<comment type="subcellular location">
    <subcellularLocation>
        <location evidence="1">Cytoplasm</location>
    </subcellularLocation>
</comment>
<comment type="similarity">
    <text evidence="1">Belongs to the methylthiotransferase family. RimO subfamily.</text>
</comment>
<gene>
    <name evidence="1" type="primary">rimO</name>
    <name type="ordered locus">CT1398</name>
</gene>
<evidence type="ECO:0000255" key="1">
    <source>
        <dbReference type="HAMAP-Rule" id="MF_01865"/>
    </source>
</evidence>
<evidence type="ECO:0000255" key="2">
    <source>
        <dbReference type="PROSITE-ProRule" id="PRU01266"/>
    </source>
</evidence>
<accession>Q8KCL7</accession>
<proteinExistence type="inferred from homology"/>
<protein>
    <recommendedName>
        <fullName evidence="1">Ribosomal protein uS12 methylthiotransferase RimO</fullName>
        <shortName evidence="1">uS12 MTTase</shortName>
        <shortName evidence="1">uS12 methylthiotransferase</shortName>
        <ecNumber evidence="1">2.8.4.4</ecNumber>
    </recommendedName>
    <alternativeName>
        <fullName evidence="1">Ribosomal protein uS12 (aspartate-C(3))-methylthiotransferase</fullName>
    </alternativeName>
    <alternativeName>
        <fullName evidence="1">Ribosome maturation factor RimO</fullName>
    </alternativeName>
</protein>